<name>H1C8_TRYCR</name>
<sequence length="74" mass="7689">MSDAAVPPKKASPKKAAAKKASPKKAAARKTAAKKTAKKPAVRKPAAKKRAAPKKKPAAKKAPKKAVKKAPKKK</sequence>
<keyword id="KW-0158">Chromosome</keyword>
<keyword id="KW-0238">DNA-binding</keyword>
<keyword id="KW-0539">Nucleus</keyword>
<dbReference type="EMBL" id="L27116">
    <property type="protein sequence ID" value="AAA66480.1"/>
    <property type="molecule type" value="mRNA"/>
</dbReference>
<dbReference type="EMBL" id="L27118">
    <property type="protein sequence ID" value="AAA66482.1"/>
    <property type="molecule type" value="Genomic_DNA"/>
</dbReference>
<dbReference type="SMR" id="P40270"/>
<dbReference type="VEuPathDB" id="TriTrypDB:TcBrA4_0139960"/>
<dbReference type="VEuPathDB" id="TriTrypDB:TcBrA4_0139970"/>
<dbReference type="VEuPathDB" id="TriTrypDB:TcBrA4_0140000"/>
<dbReference type="GO" id="GO:0000786">
    <property type="term" value="C:nucleosome"/>
    <property type="evidence" value="ECO:0007669"/>
    <property type="project" value="InterPro"/>
</dbReference>
<dbReference type="GO" id="GO:0005634">
    <property type="term" value="C:nucleus"/>
    <property type="evidence" value="ECO:0007669"/>
    <property type="project" value="UniProtKB-SubCell"/>
</dbReference>
<dbReference type="GO" id="GO:0003677">
    <property type="term" value="F:DNA binding"/>
    <property type="evidence" value="ECO:0007669"/>
    <property type="project" value="UniProtKB-KW"/>
</dbReference>
<dbReference type="GO" id="GO:0030527">
    <property type="term" value="F:structural constituent of chromatin"/>
    <property type="evidence" value="ECO:0007669"/>
    <property type="project" value="InterPro"/>
</dbReference>
<dbReference type="GO" id="GO:0006334">
    <property type="term" value="P:nucleosome assembly"/>
    <property type="evidence" value="ECO:0007669"/>
    <property type="project" value="InterPro"/>
</dbReference>
<dbReference type="InterPro" id="IPR005819">
    <property type="entry name" value="H1/H5"/>
</dbReference>
<dbReference type="PRINTS" id="PR00624">
    <property type="entry name" value="HISTONEH5"/>
</dbReference>
<accession>P40270</accession>
<accession>P40272</accession>
<evidence type="ECO:0000250" key="1"/>
<evidence type="ECO:0000256" key="2">
    <source>
        <dbReference type="SAM" id="MobiDB-lite"/>
    </source>
</evidence>
<organism>
    <name type="scientific">Trypanosoma cruzi</name>
    <dbReference type="NCBI Taxonomy" id="5693"/>
    <lineage>
        <taxon>Eukaryota</taxon>
        <taxon>Discoba</taxon>
        <taxon>Euglenozoa</taxon>
        <taxon>Kinetoplastea</taxon>
        <taxon>Metakinetoplastina</taxon>
        <taxon>Trypanosomatida</taxon>
        <taxon>Trypanosomatidae</taxon>
        <taxon>Trypanosoma</taxon>
        <taxon>Schizotrypanum</taxon>
    </lineage>
</organism>
<proteinExistence type="inferred from homology"/>
<feature type="chain" id="PRO_0000195993" description="Histone H1.C8/H1.M1">
    <location>
        <begin position="1"/>
        <end position="74"/>
    </location>
</feature>
<feature type="region of interest" description="Disordered" evidence="2">
    <location>
        <begin position="1"/>
        <end position="74"/>
    </location>
</feature>
<feature type="compositionally biased region" description="Basic residues" evidence="2">
    <location>
        <begin position="11"/>
        <end position="74"/>
    </location>
</feature>
<comment type="subcellular location">
    <subcellularLocation>
        <location evidence="1">Nucleus</location>
    </subcellularLocation>
    <subcellularLocation>
        <location evidence="1">Chromosome</location>
    </subcellularLocation>
</comment>
<protein>
    <recommendedName>
        <fullName>Histone H1.C8/H1.M1</fullName>
    </recommendedName>
</protein>
<reference key="1">
    <citation type="journal article" date="1994" name="Mol. Biochem. Parasitol.">
        <title>A gene family encoding heterogeneous histone H1 proteins in Trypanosoma cruzi.</title>
        <authorList>
            <person name="Aaslund L."/>
            <person name="Carlsson L."/>
            <person name="Henriksson J."/>
            <person name="Rydaaker M."/>
            <person name="Toro G.C."/>
            <person name="Galanti N."/>
            <person name="Pettersson U."/>
        </authorList>
    </citation>
    <scope>NUCLEOTIDE SEQUENCE [GENOMIC DNA / MRNA]</scope>
    <source>
        <strain>Tulahuen 2</strain>
    </source>
</reference>